<reference key="1">
    <citation type="journal article" date="2000" name="Nature">
        <title>Sequence and analysis of chromosome 1 of the plant Arabidopsis thaliana.</title>
        <authorList>
            <person name="Theologis A."/>
            <person name="Ecker J.R."/>
            <person name="Palm C.J."/>
            <person name="Federspiel N.A."/>
            <person name="Kaul S."/>
            <person name="White O."/>
            <person name="Alonso J."/>
            <person name="Altafi H."/>
            <person name="Araujo R."/>
            <person name="Bowman C.L."/>
            <person name="Brooks S.Y."/>
            <person name="Buehler E."/>
            <person name="Chan A."/>
            <person name="Chao Q."/>
            <person name="Chen H."/>
            <person name="Cheuk R.F."/>
            <person name="Chin C.W."/>
            <person name="Chung M.K."/>
            <person name="Conn L."/>
            <person name="Conway A.B."/>
            <person name="Conway A.R."/>
            <person name="Creasy T.H."/>
            <person name="Dewar K."/>
            <person name="Dunn P."/>
            <person name="Etgu P."/>
            <person name="Feldblyum T.V."/>
            <person name="Feng J.-D."/>
            <person name="Fong B."/>
            <person name="Fujii C.Y."/>
            <person name="Gill J.E."/>
            <person name="Goldsmith A.D."/>
            <person name="Haas B."/>
            <person name="Hansen N.F."/>
            <person name="Hughes B."/>
            <person name="Huizar L."/>
            <person name="Hunter J.L."/>
            <person name="Jenkins J."/>
            <person name="Johnson-Hopson C."/>
            <person name="Khan S."/>
            <person name="Khaykin E."/>
            <person name="Kim C.J."/>
            <person name="Koo H.L."/>
            <person name="Kremenetskaia I."/>
            <person name="Kurtz D.B."/>
            <person name="Kwan A."/>
            <person name="Lam B."/>
            <person name="Langin-Hooper S."/>
            <person name="Lee A."/>
            <person name="Lee J.M."/>
            <person name="Lenz C.A."/>
            <person name="Li J.H."/>
            <person name="Li Y.-P."/>
            <person name="Lin X."/>
            <person name="Liu S.X."/>
            <person name="Liu Z.A."/>
            <person name="Luros J.S."/>
            <person name="Maiti R."/>
            <person name="Marziali A."/>
            <person name="Militscher J."/>
            <person name="Miranda M."/>
            <person name="Nguyen M."/>
            <person name="Nierman W.C."/>
            <person name="Osborne B.I."/>
            <person name="Pai G."/>
            <person name="Peterson J."/>
            <person name="Pham P.K."/>
            <person name="Rizzo M."/>
            <person name="Rooney T."/>
            <person name="Rowley D."/>
            <person name="Sakano H."/>
            <person name="Salzberg S.L."/>
            <person name="Schwartz J.R."/>
            <person name="Shinn P."/>
            <person name="Southwick A.M."/>
            <person name="Sun H."/>
            <person name="Tallon L.J."/>
            <person name="Tambunga G."/>
            <person name="Toriumi M.J."/>
            <person name="Town C.D."/>
            <person name="Utterback T."/>
            <person name="Van Aken S."/>
            <person name="Vaysberg M."/>
            <person name="Vysotskaia V.S."/>
            <person name="Walker M."/>
            <person name="Wu D."/>
            <person name="Yu G."/>
            <person name="Fraser C.M."/>
            <person name="Venter J.C."/>
            <person name="Davis R.W."/>
        </authorList>
    </citation>
    <scope>NUCLEOTIDE SEQUENCE [LARGE SCALE GENOMIC DNA]</scope>
    <source>
        <strain>cv. Columbia</strain>
    </source>
</reference>
<reference key="2">
    <citation type="journal article" date="2017" name="Plant J.">
        <title>Araport11: a complete reannotation of the Arabidopsis thaliana reference genome.</title>
        <authorList>
            <person name="Cheng C.Y."/>
            <person name="Krishnakumar V."/>
            <person name="Chan A.P."/>
            <person name="Thibaud-Nissen F."/>
            <person name="Schobel S."/>
            <person name="Town C.D."/>
        </authorList>
    </citation>
    <scope>GENOME REANNOTATION</scope>
    <source>
        <strain>cv. Columbia</strain>
    </source>
</reference>
<reference key="3">
    <citation type="journal article" date="2003" name="Science">
        <title>Empirical analysis of transcriptional activity in the Arabidopsis genome.</title>
        <authorList>
            <person name="Yamada K."/>
            <person name="Lim J."/>
            <person name="Dale J.M."/>
            <person name="Chen H."/>
            <person name="Shinn P."/>
            <person name="Palm C.J."/>
            <person name="Southwick A.M."/>
            <person name="Wu H.C."/>
            <person name="Kim C.J."/>
            <person name="Nguyen M."/>
            <person name="Pham P.K."/>
            <person name="Cheuk R.F."/>
            <person name="Karlin-Newmann G."/>
            <person name="Liu S.X."/>
            <person name="Lam B."/>
            <person name="Sakano H."/>
            <person name="Wu T."/>
            <person name="Yu G."/>
            <person name="Miranda M."/>
            <person name="Quach H.L."/>
            <person name="Tripp M."/>
            <person name="Chang C.H."/>
            <person name="Lee J.M."/>
            <person name="Toriumi M.J."/>
            <person name="Chan M.M."/>
            <person name="Tang C.C."/>
            <person name="Onodera C.S."/>
            <person name="Deng J.M."/>
            <person name="Akiyama K."/>
            <person name="Ansari Y."/>
            <person name="Arakawa T."/>
            <person name="Banh J."/>
            <person name="Banno F."/>
            <person name="Bowser L."/>
            <person name="Brooks S.Y."/>
            <person name="Carninci P."/>
            <person name="Chao Q."/>
            <person name="Choy N."/>
            <person name="Enju A."/>
            <person name="Goldsmith A.D."/>
            <person name="Gurjal M."/>
            <person name="Hansen N.F."/>
            <person name="Hayashizaki Y."/>
            <person name="Johnson-Hopson C."/>
            <person name="Hsuan V.W."/>
            <person name="Iida K."/>
            <person name="Karnes M."/>
            <person name="Khan S."/>
            <person name="Koesema E."/>
            <person name="Ishida J."/>
            <person name="Jiang P.X."/>
            <person name="Jones T."/>
            <person name="Kawai J."/>
            <person name="Kamiya A."/>
            <person name="Meyers C."/>
            <person name="Nakajima M."/>
            <person name="Narusaka M."/>
            <person name="Seki M."/>
            <person name="Sakurai T."/>
            <person name="Satou M."/>
            <person name="Tamse R."/>
            <person name="Vaysberg M."/>
            <person name="Wallender E.K."/>
            <person name="Wong C."/>
            <person name="Yamamura Y."/>
            <person name="Yuan S."/>
            <person name="Shinozaki K."/>
            <person name="Davis R.W."/>
            <person name="Theologis A."/>
            <person name="Ecker J.R."/>
        </authorList>
    </citation>
    <scope>NUCLEOTIDE SEQUENCE [LARGE SCALE MRNA]</scope>
    <source>
        <strain>cv. Columbia</strain>
    </source>
</reference>
<reference key="4">
    <citation type="journal article" date="2009" name="DNA Res.">
        <title>Analysis of multiple occurrences of alternative splicing events in Arabidopsis thaliana using novel sequenced full-length cDNAs.</title>
        <authorList>
            <person name="Iida K."/>
            <person name="Fukami-Kobayashi K."/>
            <person name="Toyoda A."/>
            <person name="Sakaki Y."/>
            <person name="Kobayashi M."/>
            <person name="Seki M."/>
            <person name="Shinozaki K."/>
        </authorList>
    </citation>
    <scope>NUCLEOTIDE SEQUENCE [LARGE SCALE MRNA]</scope>
    <source>
        <strain>cv. Columbia</strain>
    </source>
</reference>
<reference key="5">
    <citation type="submission" date="2002-03" db="EMBL/GenBank/DDBJ databases">
        <title>Full-length cDNA from Arabidopsis thaliana.</title>
        <authorList>
            <person name="Brover V.V."/>
            <person name="Troukhan M.E."/>
            <person name="Alexandrov N.A."/>
            <person name="Lu Y.-P."/>
            <person name="Flavell R.B."/>
            <person name="Feldmann K.A."/>
        </authorList>
    </citation>
    <scope>NUCLEOTIDE SEQUENCE [LARGE SCALE MRNA]</scope>
</reference>
<reference key="6">
    <citation type="journal article" date="2011" name="Funct. Integr. Genomics">
        <title>Genome-wide analysis of rice and Arabidopsis identifies two glyoxalase genes that are highly expressed in abiotic stresses.</title>
        <authorList>
            <person name="Mustafiz A."/>
            <person name="Singh A.K."/>
            <person name="Pareek A."/>
            <person name="Sopory S.K."/>
            <person name="Singla-Pareek S.L."/>
        </authorList>
    </citation>
    <scope>INDUCTION BY ABIOTIC STRESSES</scope>
    <scope>TISSUE SPECIFICITY</scope>
    <scope>GENE FAMILY</scope>
    <scope>NOMENCLATURE</scope>
</reference>
<reference key="7">
    <citation type="journal article" date="2018" name="Front. Plant Sci.">
        <title>Dissecting the physiological function of plant glyoxalase I and glyoxalase I-like proteins.</title>
        <authorList>
            <person name="Schmitz J."/>
            <person name="Rossoni A.W."/>
            <person name="Maurino V.G."/>
        </authorList>
    </citation>
    <scope>TISSUE SPECIFICITY</scope>
    <scope>INDUCTION BY SALT AND NICKEL IONS</scope>
    <scope>GENE FAMILY</scope>
</reference>
<reference key="8">
    <citation type="journal article" date="2018" name="Plant Cell Environ.">
        <title>Genome-wide association study reveals novel players in defense hormone crosstalk in Arabidopsis.</title>
        <authorList>
            <person name="Proietti S."/>
            <person name="Caarls L."/>
            <person name="Coolen S."/>
            <person name="Van Pelt J.A."/>
            <person name="Van Wees S.C.M."/>
            <person name="Pieterse C.M.J."/>
        </authorList>
    </citation>
    <scope>FUNCTION</scope>
    <scope>DISRUPTION PHENOTYPE</scope>
    <source>
        <strain>cv. Col-8</strain>
    </source>
</reference>
<reference key="9">
    <citation type="journal article" date="2019" name="Biomolecules">
        <title>GLYI4 plays a role in methylglyoxal detoxification and jasmonate-mediated stress responses in Arabidopsis thaliana.</title>
        <authorList>
            <person name="Proietti S."/>
            <person name="Falconieri G.S."/>
            <person name="Bertini L."/>
            <person name="Baccelli I."/>
            <person name="Paccosi E."/>
            <person name="Belardo A."/>
            <person name="Timperio A.M."/>
            <person name="Caruso C."/>
        </authorList>
    </citation>
    <scope>FUNCTION</scope>
    <scope>DISRUPTION PHENOTYPE</scope>
    <scope>SUBCELLULAR LOCATION</scope>
    <scope>INDUCTION BY METHYLGLYOXAL</scope>
    <source>
        <strain>cv. Col-8</strain>
    </source>
</reference>
<gene>
    <name evidence="6 7 8" type="primary">GLYI4</name>
    <name evidence="10" type="ordered locus">At1g15380</name>
    <name evidence="11" type="ORF">F9L1.33</name>
</gene>
<sequence>MKEDAGNPLHLTSLNHVSVLCRSVDESMNFYQKVLGFIPIRRPESLNFEGAWLFGHGIGIHLLCAPEPEKLPKKTAINPKDNHISFQCESMGVVEKKLEEMGIDYVRALVEEGGIQVDQLFFHDPDGFMIEICNCDSLPVVPLVGEMARSCSRVKLHQMVQPQPQTQIHQVVYP</sequence>
<proteinExistence type="evidence at transcript level"/>
<accession>Q9XI31</accession>
<keyword id="KW-1003">Cell membrane</keyword>
<keyword id="KW-0963">Cytoplasm</keyword>
<keyword id="KW-0456">Lyase</keyword>
<keyword id="KW-0472">Membrane</keyword>
<keyword id="KW-0611">Plant defense</keyword>
<keyword id="KW-1185">Reference proteome</keyword>
<keyword id="KW-0346">Stress response</keyword>
<feature type="chain" id="PRO_0000453957" description="Glyoxylase I 4">
    <location>
        <begin position="1"/>
        <end position="174"/>
    </location>
</feature>
<feature type="domain" description="VOC" evidence="1">
    <location>
        <begin position="13"/>
        <end position="135"/>
    </location>
</feature>
<feature type="active site" description="Proton donor/acceptor" evidence="1">
    <location>
        <position position="131"/>
    </location>
</feature>
<dbReference type="EMBL" id="AC007591">
    <property type="protein sequence ID" value="AAD39666.1"/>
    <property type="molecule type" value="Genomic_DNA"/>
</dbReference>
<dbReference type="EMBL" id="CP002684">
    <property type="protein sequence ID" value="AEE29312.1"/>
    <property type="molecule type" value="Genomic_DNA"/>
</dbReference>
<dbReference type="EMBL" id="CP002684">
    <property type="protein sequence ID" value="AEE29313.1"/>
    <property type="molecule type" value="Genomic_DNA"/>
</dbReference>
<dbReference type="EMBL" id="AY072377">
    <property type="protein sequence ID" value="AAL62369.1"/>
    <property type="molecule type" value="mRNA"/>
</dbReference>
<dbReference type="EMBL" id="AY114619">
    <property type="protein sequence ID" value="AAM47938.1"/>
    <property type="molecule type" value="mRNA"/>
</dbReference>
<dbReference type="EMBL" id="AK317354">
    <property type="protein sequence ID" value="BAH20026.1"/>
    <property type="molecule type" value="mRNA"/>
</dbReference>
<dbReference type="EMBL" id="AY088300">
    <property type="protein sequence ID" value="AAM65839.1"/>
    <property type="molecule type" value="mRNA"/>
</dbReference>
<dbReference type="PIR" id="D86288">
    <property type="entry name" value="D86288"/>
</dbReference>
<dbReference type="RefSeq" id="NP_001031049.1">
    <property type="nucleotide sequence ID" value="NM_001035972.2"/>
</dbReference>
<dbReference type="RefSeq" id="NP_563973.1">
    <property type="nucleotide sequence ID" value="NM_101407.4"/>
</dbReference>
<dbReference type="SMR" id="Q9XI31"/>
<dbReference type="FunCoup" id="Q9XI31">
    <property type="interactions" value="6"/>
</dbReference>
<dbReference type="STRING" id="3702.Q9XI31"/>
<dbReference type="PaxDb" id="3702-AT1G15380.1"/>
<dbReference type="ProteomicsDB" id="181572"/>
<dbReference type="DNASU" id="838107"/>
<dbReference type="EnsemblPlants" id="AT1G15380.1">
    <property type="protein sequence ID" value="AT1G15380.1"/>
    <property type="gene ID" value="AT1G15380"/>
</dbReference>
<dbReference type="EnsemblPlants" id="AT1G15380.2">
    <property type="protein sequence ID" value="AT1G15380.2"/>
    <property type="gene ID" value="AT1G15380"/>
</dbReference>
<dbReference type="GeneID" id="838107"/>
<dbReference type="Gramene" id="AT1G15380.1">
    <property type="protein sequence ID" value="AT1G15380.1"/>
    <property type="gene ID" value="AT1G15380"/>
</dbReference>
<dbReference type="Gramene" id="AT1G15380.2">
    <property type="protein sequence ID" value="AT1G15380.2"/>
    <property type="gene ID" value="AT1G15380"/>
</dbReference>
<dbReference type="KEGG" id="ath:AT1G15380"/>
<dbReference type="Araport" id="AT1G15380"/>
<dbReference type="TAIR" id="AT1G15380">
    <property type="gene designation" value="GLYI4"/>
</dbReference>
<dbReference type="eggNOG" id="ENOG502QSP6">
    <property type="taxonomic scope" value="Eukaryota"/>
</dbReference>
<dbReference type="HOGENOM" id="CLU_046006_12_1_1"/>
<dbReference type="InParanoid" id="Q9XI31"/>
<dbReference type="OMA" id="IHLLCAP"/>
<dbReference type="OrthoDB" id="16820at2759"/>
<dbReference type="PhylomeDB" id="Q9XI31"/>
<dbReference type="PRO" id="PR:Q9XI31"/>
<dbReference type="Proteomes" id="UP000006548">
    <property type="component" value="Chromosome 1"/>
</dbReference>
<dbReference type="ExpressionAtlas" id="Q9XI31">
    <property type="expression patterns" value="baseline and differential"/>
</dbReference>
<dbReference type="GO" id="GO:0005737">
    <property type="term" value="C:cytoplasm"/>
    <property type="evidence" value="ECO:0000314"/>
    <property type="project" value="UniProtKB"/>
</dbReference>
<dbReference type="GO" id="GO:0005886">
    <property type="term" value="C:plasma membrane"/>
    <property type="evidence" value="ECO:0000314"/>
    <property type="project" value="UniProtKB"/>
</dbReference>
<dbReference type="GO" id="GO:0016829">
    <property type="term" value="F:lyase activity"/>
    <property type="evidence" value="ECO:0007669"/>
    <property type="project" value="UniProtKB-KW"/>
</dbReference>
<dbReference type="GO" id="GO:0140041">
    <property type="term" value="P:cellular detoxification of methylglyoxal"/>
    <property type="evidence" value="ECO:0000315"/>
    <property type="project" value="UniProtKB"/>
</dbReference>
<dbReference type="GO" id="GO:0006952">
    <property type="term" value="P:defense response"/>
    <property type="evidence" value="ECO:0007669"/>
    <property type="project" value="UniProtKB-KW"/>
</dbReference>
<dbReference type="GO" id="GO:0009787">
    <property type="term" value="P:regulation of abscisic acid-activated signaling pathway"/>
    <property type="evidence" value="ECO:0000315"/>
    <property type="project" value="TAIR"/>
</dbReference>
<dbReference type="GO" id="GO:2000022">
    <property type="term" value="P:regulation of jasmonic acid mediated signaling pathway"/>
    <property type="evidence" value="ECO:0000315"/>
    <property type="project" value="TAIR"/>
</dbReference>
<dbReference type="GO" id="GO:2000031">
    <property type="term" value="P:regulation of salicylic acid mediated signaling pathway"/>
    <property type="evidence" value="ECO:0000315"/>
    <property type="project" value="TAIR"/>
</dbReference>
<dbReference type="GO" id="GO:0009409">
    <property type="term" value="P:response to cold"/>
    <property type="evidence" value="ECO:0000270"/>
    <property type="project" value="UniProtKB"/>
</dbReference>
<dbReference type="GO" id="GO:0009408">
    <property type="term" value="P:response to heat"/>
    <property type="evidence" value="ECO:0000270"/>
    <property type="project" value="UniProtKB"/>
</dbReference>
<dbReference type="GO" id="GO:0009753">
    <property type="term" value="P:response to jasmonic acid"/>
    <property type="evidence" value="ECO:0000314"/>
    <property type="project" value="UniProtKB"/>
</dbReference>
<dbReference type="GO" id="GO:0051595">
    <property type="term" value="P:response to methylglyoxal"/>
    <property type="evidence" value="ECO:0000270"/>
    <property type="project" value="UniProtKB"/>
</dbReference>
<dbReference type="GO" id="GO:0010045">
    <property type="term" value="P:response to nickel cation"/>
    <property type="evidence" value="ECO:0000270"/>
    <property type="project" value="UniProtKB"/>
</dbReference>
<dbReference type="GO" id="GO:0006970">
    <property type="term" value="P:response to osmotic stress"/>
    <property type="evidence" value="ECO:0000270"/>
    <property type="project" value="UniProtKB"/>
</dbReference>
<dbReference type="GO" id="GO:0006979">
    <property type="term" value="P:response to oxidative stress"/>
    <property type="evidence" value="ECO:0000270"/>
    <property type="project" value="UniProtKB"/>
</dbReference>
<dbReference type="GO" id="GO:1902074">
    <property type="term" value="P:response to salt"/>
    <property type="evidence" value="ECO:0000270"/>
    <property type="project" value="UniProtKB"/>
</dbReference>
<dbReference type="GO" id="GO:0010224">
    <property type="term" value="P:response to UV-B"/>
    <property type="evidence" value="ECO:0000270"/>
    <property type="project" value="UniProtKB"/>
</dbReference>
<dbReference type="GO" id="GO:0009414">
    <property type="term" value="P:response to water deprivation"/>
    <property type="evidence" value="ECO:0000270"/>
    <property type="project" value="UniProtKB"/>
</dbReference>
<dbReference type="GO" id="GO:0009611">
    <property type="term" value="P:response to wounding"/>
    <property type="evidence" value="ECO:0000270"/>
    <property type="project" value="UniProtKB"/>
</dbReference>
<dbReference type="CDD" id="cd07245">
    <property type="entry name" value="VOC_like"/>
    <property type="match status" value="1"/>
</dbReference>
<dbReference type="Gene3D" id="3.10.180.10">
    <property type="entry name" value="2,3-Dihydroxybiphenyl 1,2-Dioxygenase, domain 1"/>
    <property type="match status" value="1"/>
</dbReference>
<dbReference type="InterPro" id="IPR029068">
    <property type="entry name" value="Glyas_Bleomycin-R_OHBP_Dase"/>
</dbReference>
<dbReference type="InterPro" id="IPR004360">
    <property type="entry name" value="Glyas_Fos-R_dOase_dom"/>
</dbReference>
<dbReference type="InterPro" id="IPR037523">
    <property type="entry name" value="VOC"/>
</dbReference>
<dbReference type="PANTHER" id="PTHR46142">
    <property type="match status" value="1"/>
</dbReference>
<dbReference type="PANTHER" id="PTHR46142:SF11">
    <property type="entry name" value="GLYOXYLASE I 4"/>
    <property type="match status" value="1"/>
</dbReference>
<dbReference type="Pfam" id="PF00903">
    <property type="entry name" value="Glyoxalase"/>
    <property type="match status" value="1"/>
</dbReference>
<dbReference type="SUPFAM" id="SSF54593">
    <property type="entry name" value="Glyoxalase/Bleomycin resistance protein/Dihydroxybiphenyl dioxygenase"/>
    <property type="match status" value="1"/>
</dbReference>
<dbReference type="PROSITE" id="PS51819">
    <property type="entry name" value="VOC"/>
    <property type="match status" value="1"/>
</dbReference>
<comment type="function">
    <text evidence="3 5">Involved in the detoxification and scavenging of methylglyoxal (MG), a cytotoxic aldehyde produced in response to primary metabolism alteration observed during biotic and abiotic stresses (PubMed:31652571). Modulates cross-talk between salicylic acid (SA) and jasmonic acid (JA) signaling pathways during defense responses to pathogens such as Botrytis cinerea (PubMed:29852537).</text>
</comment>
<comment type="subcellular location">
    <subcellularLocation>
        <location evidence="5">Cell membrane</location>
    </subcellularLocation>
    <subcellularLocation>
        <location evidence="5">Cytoplasm</location>
    </subcellularLocation>
    <text evidence="5">Localized at the plasma membrane during methylglyoxal (MG) accumulation, but translocates to the cytoplasm upon jasmonate (MeJA) stimulus.</text>
</comment>
<comment type="tissue specificity">
    <text evidence="2 4">Mostly expressed in roots, and, to a lower extent, in leaves, flowers, seeds and siliques.</text>
</comment>
<comment type="induction">
    <text evidence="2 4 5">Accumulates in response to abiotic stresses such as cold, heat, drought, oxidative stress, genotoxic compounds, wounding, osmotic stress and UV-B (PubMed:21213008). Slightly induced by salt (NaCl) and nickel ions Ni(2+) (PubMed:21213008, PubMed:30483284). Strongly induced by methylglyoxal (MG) (PubMed:31652571).</text>
</comment>
<comment type="disruption phenotype">
    <text evidence="3 5">General stress phenotype, characterized by compromised methylglyoxal (MG) scavenging, accumulation of reactive oxygen species (ROS), stomatal closure, and reduced fitness associated with reduced leaf area and dry weight, as well as prolonged flowering time (PubMed:31652571). Increased susceptibility to the pathogenic fungus Plectospherella cucumerina which triggers mainly the jasmonate (JA)-mediated defense signaling pathway (PubMed:31652571). Abnormal cross-talk between salicylic acid (SA) and jasmonic acid (JA) signaling pathways (PubMed:29852537).</text>
</comment>
<comment type="similarity">
    <text evidence="9">Belongs to the glyoxalase I family.</text>
</comment>
<name>GLYI4_ARATH</name>
<protein>
    <recommendedName>
        <fullName evidence="7 8">Glyoxylase I 4</fullName>
        <shortName evidence="7">AtGLXI-like;4</shortName>
        <shortName evidence="6">AtGLYI4</shortName>
    </recommendedName>
</protein>
<organism>
    <name type="scientific">Arabidopsis thaliana</name>
    <name type="common">Mouse-ear cress</name>
    <dbReference type="NCBI Taxonomy" id="3702"/>
    <lineage>
        <taxon>Eukaryota</taxon>
        <taxon>Viridiplantae</taxon>
        <taxon>Streptophyta</taxon>
        <taxon>Embryophyta</taxon>
        <taxon>Tracheophyta</taxon>
        <taxon>Spermatophyta</taxon>
        <taxon>Magnoliopsida</taxon>
        <taxon>eudicotyledons</taxon>
        <taxon>Gunneridae</taxon>
        <taxon>Pentapetalae</taxon>
        <taxon>rosids</taxon>
        <taxon>malvids</taxon>
        <taxon>Brassicales</taxon>
        <taxon>Brassicaceae</taxon>
        <taxon>Camelineae</taxon>
        <taxon>Arabidopsis</taxon>
    </lineage>
</organism>
<evidence type="ECO:0000255" key="1">
    <source>
        <dbReference type="PROSITE-ProRule" id="PRU01163"/>
    </source>
</evidence>
<evidence type="ECO:0000269" key="2">
    <source>
    </source>
</evidence>
<evidence type="ECO:0000269" key="3">
    <source>
    </source>
</evidence>
<evidence type="ECO:0000269" key="4">
    <source>
    </source>
</evidence>
<evidence type="ECO:0000269" key="5">
    <source>
    </source>
</evidence>
<evidence type="ECO:0000303" key="6">
    <source>
    </source>
</evidence>
<evidence type="ECO:0000303" key="7">
    <source>
    </source>
</evidence>
<evidence type="ECO:0000303" key="8">
    <source>
    </source>
</evidence>
<evidence type="ECO:0000305" key="9"/>
<evidence type="ECO:0000312" key="10">
    <source>
        <dbReference type="Araport" id="AT1G15380"/>
    </source>
</evidence>
<evidence type="ECO:0000312" key="11">
    <source>
        <dbReference type="EMBL" id="AAD39666.1"/>
    </source>
</evidence>